<dbReference type="EC" id="6.1.1.6" evidence="1"/>
<dbReference type="EMBL" id="AM286415">
    <property type="protein sequence ID" value="CAL13402.1"/>
    <property type="molecule type" value="Genomic_DNA"/>
</dbReference>
<dbReference type="RefSeq" id="WP_011817018.1">
    <property type="nucleotide sequence ID" value="NC_008800.1"/>
</dbReference>
<dbReference type="RefSeq" id="YP_001007545.1">
    <property type="nucleotide sequence ID" value="NC_008800.1"/>
</dbReference>
<dbReference type="SMR" id="A1JPL4"/>
<dbReference type="KEGG" id="yen:YE3374"/>
<dbReference type="PATRIC" id="fig|393305.7.peg.3582"/>
<dbReference type="eggNOG" id="COG1190">
    <property type="taxonomic scope" value="Bacteria"/>
</dbReference>
<dbReference type="HOGENOM" id="CLU_008255_6_0_6"/>
<dbReference type="OrthoDB" id="9801152at2"/>
<dbReference type="Proteomes" id="UP000000642">
    <property type="component" value="Chromosome"/>
</dbReference>
<dbReference type="GO" id="GO:0005829">
    <property type="term" value="C:cytosol"/>
    <property type="evidence" value="ECO:0007669"/>
    <property type="project" value="TreeGrafter"/>
</dbReference>
<dbReference type="GO" id="GO:0005524">
    <property type="term" value="F:ATP binding"/>
    <property type="evidence" value="ECO:0007669"/>
    <property type="project" value="UniProtKB-UniRule"/>
</dbReference>
<dbReference type="GO" id="GO:0004824">
    <property type="term" value="F:lysine-tRNA ligase activity"/>
    <property type="evidence" value="ECO:0007669"/>
    <property type="project" value="UniProtKB-UniRule"/>
</dbReference>
<dbReference type="GO" id="GO:0000287">
    <property type="term" value="F:magnesium ion binding"/>
    <property type="evidence" value="ECO:0007669"/>
    <property type="project" value="UniProtKB-UniRule"/>
</dbReference>
<dbReference type="GO" id="GO:0000049">
    <property type="term" value="F:tRNA binding"/>
    <property type="evidence" value="ECO:0007669"/>
    <property type="project" value="TreeGrafter"/>
</dbReference>
<dbReference type="GO" id="GO:0006430">
    <property type="term" value="P:lysyl-tRNA aminoacylation"/>
    <property type="evidence" value="ECO:0007669"/>
    <property type="project" value="UniProtKB-UniRule"/>
</dbReference>
<dbReference type="CDD" id="cd00775">
    <property type="entry name" value="LysRS_core"/>
    <property type="match status" value="1"/>
</dbReference>
<dbReference type="CDD" id="cd04322">
    <property type="entry name" value="LysRS_N"/>
    <property type="match status" value="1"/>
</dbReference>
<dbReference type="FunFam" id="2.40.50.140:FF:000024">
    <property type="entry name" value="Lysine--tRNA ligase"/>
    <property type="match status" value="1"/>
</dbReference>
<dbReference type="FunFam" id="3.30.930.10:FF:000001">
    <property type="entry name" value="Lysine--tRNA ligase"/>
    <property type="match status" value="1"/>
</dbReference>
<dbReference type="Gene3D" id="3.30.930.10">
    <property type="entry name" value="Bira Bifunctional Protein, Domain 2"/>
    <property type="match status" value="1"/>
</dbReference>
<dbReference type="Gene3D" id="2.40.50.140">
    <property type="entry name" value="Nucleic acid-binding proteins"/>
    <property type="match status" value="1"/>
</dbReference>
<dbReference type="HAMAP" id="MF_00252">
    <property type="entry name" value="Lys_tRNA_synth_class2"/>
    <property type="match status" value="1"/>
</dbReference>
<dbReference type="InterPro" id="IPR004364">
    <property type="entry name" value="Aa-tRNA-synt_II"/>
</dbReference>
<dbReference type="InterPro" id="IPR006195">
    <property type="entry name" value="aa-tRNA-synth_II"/>
</dbReference>
<dbReference type="InterPro" id="IPR045864">
    <property type="entry name" value="aa-tRNA-synth_II/BPL/LPL"/>
</dbReference>
<dbReference type="InterPro" id="IPR002313">
    <property type="entry name" value="Lys-tRNA-ligase_II"/>
</dbReference>
<dbReference type="InterPro" id="IPR034762">
    <property type="entry name" value="Lys-tRNA-ligase_II_bac/euk"/>
</dbReference>
<dbReference type="InterPro" id="IPR044136">
    <property type="entry name" value="Lys-tRNA-ligase_II_N"/>
</dbReference>
<dbReference type="InterPro" id="IPR018149">
    <property type="entry name" value="Lys-tRNA-synth_II_C"/>
</dbReference>
<dbReference type="InterPro" id="IPR012340">
    <property type="entry name" value="NA-bd_OB-fold"/>
</dbReference>
<dbReference type="InterPro" id="IPR004365">
    <property type="entry name" value="NA-bd_OB_tRNA"/>
</dbReference>
<dbReference type="NCBIfam" id="TIGR00499">
    <property type="entry name" value="lysS_bact"/>
    <property type="match status" value="1"/>
</dbReference>
<dbReference type="NCBIfam" id="NF001756">
    <property type="entry name" value="PRK00484.1"/>
    <property type="match status" value="1"/>
</dbReference>
<dbReference type="PANTHER" id="PTHR42918:SF15">
    <property type="entry name" value="LYSINE--TRNA LIGASE, CHLOROPLASTIC_MITOCHONDRIAL"/>
    <property type="match status" value="1"/>
</dbReference>
<dbReference type="PANTHER" id="PTHR42918">
    <property type="entry name" value="LYSYL-TRNA SYNTHETASE"/>
    <property type="match status" value="1"/>
</dbReference>
<dbReference type="Pfam" id="PF00152">
    <property type="entry name" value="tRNA-synt_2"/>
    <property type="match status" value="1"/>
</dbReference>
<dbReference type="Pfam" id="PF01336">
    <property type="entry name" value="tRNA_anti-codon"/>
    <property type="match status" value="1"/>
</dbReference>
<dbReference type="PIRSF" id="PIRSF039101">
    <property type="entry name" value="LysRS2"/>
    <property type="match status" value="1"/>
</dbReference>
<dbReference type="PRINTS" id="PR00982">
    <property type="entry name" value="TRNASYNTHLYS"/>
</dbReference>
<dbReference type="SUPFAM" id="SSF55681">
    <property type="entry name" value="Class II aaRS and biotin synthetases"/>
    <property type="match status" value="1"/>
</dbReference>
<dbReference type="SUPFAM" id="SSF50249">
    <property type="entry name" value="Nucleic acid-binding proteins"/>
    <property type="match status" value="1"/>
</dbReference>
<dbReference type="PROSITE" id="PS50862">
    <property type="entry name" value="AA_TRNA_LIGASE_II"/>
    <property type="match status" value="1"/>
</dbReference>
<protein>
    <recommendedName>
        <fullName evidence="1">Lysine--tRNA ligase</fullName>
        <ecNumber evidence="1">6.1.1.6</ecNumber>
    </recommendedName>
    <alternativeName>
        <fullName evidence="1">Lysyl-tRNA synthetase</fullName>
        <shortName evidence="1">LysRS</shortName>
    </alternativeName>
</protein>
<name>SYK_YERE8</name>
<comment type="catalytic activity">
    <reaction evidence="1">
        <text>tRNA(Lys) + L-lysine + ATP = L-lysyl-tRNA(Lys) + AMP + diphosphate</text>
        <dbReference type="Rhea" id="RHEA:20792"/>
        <dbReference type="Rhea" id="RHEA-COMP:9696"/>
        <dbReference type="Rhea" id="RHEA-COMP:9697"/>
        <dbReference type="ChEBI" id="CHEBI:30616"/>
        <dbReference type="ChEBI" id="CHEBI:32551"/>
        <dbReference type="ChEBI" id="CHEBI:33019"/>
        <dbReference type="ChEBI" id="CHEBI:78442"/>
        <dbReference type="ChEBI" id="CHEBI:78529"/>
        <dbReference type="ChEBI" id="CHEBI:456215"/>
        <dbReference type="EC" id="6.1.1.6"/>
    </reaction>
</comment>
<comment type="cofactor">
    <cofactor evidence="1">
        <name>Mg(2+)</name>
        <dbReference type="ChEBI" id="CHEBI:18420"/>
    </cofactor>
    <text evidence="1">Binds 3 Mg(2+) ions per subunit.</text>
</comment>
<comment type="subunit">
    <text evidence="1">Homodimer.</text>
</comment>
<comment type="subcellular location">
    <subcellularLocation>
        <location evidence="1">Cytoplasm</location>
    </subcellularLocation>
</comment>
<comment type="similarity">
    <text evidence="1">Belongs to the class-II aminoacyl-tRNA synthetase family.</text>
</comment>
<keyword id="KW-0030">Aminoacyl-tRNA synthetase</keyword>
<keyword id="KW-0067">ATP-binding</keyword>
<keyword id="KW-0963">Cytoplasm</keyword>
<keyword id="KW-0436">Ligase</keyword>
<keyword id="KW-0460">Magnesium</keyword>
<keyword id="KW-0479">Metal-binding</keyword>
<keyword id="KW-0547">Nucleotide-binding</keyword>
<keyword id="KW-0648">Protein biosynthesis</keyword>
<sequence>MSEQKPQVAEQAQELNSELQARREKLAALREKGIAFPNDFRREHLSDQLHAEYGEKTNEELEALDIEVTVAGRMMTRRIMGKASFVTLQDVGGRIQLYVSRDDLPEGVYNEEFKKWDLGDILGARGKLFKTKTGELSIHCSELRLLTKALRPLPDKFHGLADQETRYRQRYLDLIANDESRNTFKVRSQVMSGIRRFMVEKGFMEVETPMMQVIPGGASARPFVTHHNALDIDMYLRIAPELYLKRLVVGGFERVFEINRNFRNEGVSPRHNPEFTMMELYMAYADYKDLIALTEELFRTLTETVLGSSVVQYGDQTFDFGKPFAKLTMKEAICKYRPETNVADLDDMDKAVAIAESLGIKVEKSWGLGRVQCEIFEETAESHLIQPTFITEYPAEVSPLARRNDDNPFITDRFEFFIGGREIGNGFSELNDAEDQAQRFADQVSAKEAGDDEAMFYDEDYVTALEHGLPPTAGLGIGIDRMVMLFTNSHTIRDVILFPAMRPVK</sequence>
<feature type="chain" id="PRO_1000012966" description="Lysine--tRNA ligase">
    <location>
        <begin position="1"/>
        <end position="505"/>
    </location>
</feature>
<feature type="binding site" evidence="1">
    <location>
        <position position="415"/>
    </location>
    <ligand>
        <name>Mg(2+)</name>
        <dbReference type="ChEBI" id="CHEBI:18420"/>
        <label>1</label>
    </ligand>
</feature>
<feature type="binding site" evidence="1">
    <location>
        <position position="422"/>
    </location>
    <ligand>
        <name>Mg(2+)</name>
        <dbReference type="ChEBI" id="CHEBI:18420"/>
        <label>1</label>
    </ligand>
</feature>
<feature type="binding site" evidence="1">
    <location>
        <position position="422"/>
    </location>
    <ligand>
        <name>Mg(2+)</name>
        <dbReference type="ChEBI" id="CHEBI:18420"/>
        <label>2</label>
    </ligand>
</feature>
<organism>
    <name type="scientific">Yersinia enterocolitica serotype O:8 / biotype 1B (strain NCTC 13174 / 8081)</name>
    <dbReference type="NCBI Taxonomy" id="393305"/>
    <lineage>
        <taxon>Bacteria</taxon>
        <taxon>Pseudomonadati</taxon>
        <taxon>Pseudomonadota</taxon>
        <taxon>Gammaproteobacteria</taxon>
        <taxon>Enterobacterales</taxon>
        <taxon>Yersiniaceae</taxon>
        <taxon>Yersinia</taxon>
    </lineage>
</organism>
<evidence type="ECO:0000255" key="1">
    <source>
        <dbReference type="HAMAP-Rule" id="MF_00252"/>
    </source>
</evidence>
<accession>A1JPL4</accession>
<gene>
    <name evidence="1" type="primary">lysS</name>
    <name type="ordered locus">YE3374</name>
</gene>
<proteinExistence type="inferred from homology"/>
<reference key="1">
    <citation type="journal article" date="2006" name="PLoS Genet.">
        <title>The complete genome sequence and comparative genome analysis of the high pathogenicity Yersinia enterocolitica strain 8081.</title>
        <authorList>
            <person name="Thomson N.R."/>
            <person name="Howard S."/>
            <person name="Wren B.W."/>
            <person name="Holden M.T.G."/>
            <person name="Crossman L."/>
            <person name="Challis G.L."/>
            <person name="Churcher C."/>
            <person name="Mungall K."/>
            <person name="Brooks K."/>
            <person name="Chillingworth T."/>
            <person name="Feltwell T."/>
            <person name="Abdellah Z."/>
            <person name="Hauser H."/>
            <person name="Jagels K."/>
            <person name="Maddison M."/>
            <person name="Moule S."/>
            <person name="Sanders M."/>
            <person name="Whitehead S."/>
            <person name="Quail M.A."/>
            <person name="Dougan G."/>
            <person name="Parkhill J."/>
            <person name="Prentice M.B."/>
        </authorList>
    </citation>
    <scope>NUCLEOTIDE SEQUENCE [LARGE SCALE GENOMIC DNA]</scope>
    <source>
        <strain>NCTC 13174 / 8081</strain>
    </source>
</reference>